<sequence length="274" mass="29764">MFTDKETHRKPFPTWAHLLHSEPSKQFVFGNWKMNKTLTEAQTFLKSFISSDILSNPQIITGIIPPFTLLSACQQAVSDSPIFLGAQTTHEADSGAFTGEISAPMLKDIGVDFVLIGHSERRHIFHEQNPVLAEKAAAAIHSGMIPVLCIGETLEEQESGATQDILLNQLTTGLSKLPEQASFILAYEPVWAIGTGKVAHPDLVQETHAFCRKTIASLFSKDIAERTPILYGGSVKADNARSLSLCPDVNGLLVGGASLSSENFLSIIQQIDIP</sequence>
<evidence type="ECO:0000255" key="1">
    <source>
        <dbReference type="HAMAP-Rule" id="MF_00147"/>
    </source>
</evidence>
<protein>
    <recommendedName>
        <fullName evidence="1">Triosephosphate isomerase</fullName>
        <shortName evidence="1">TIM</shortName>
        <shortName evidence="1">TPI</shortName>
        <ecNumber evidence="1">5.3.1.1</ecNumber>
    </recommendedName>
    <alternativeName>
        <fullName evidence="1">Triose-phosphate isomerase</fullName>
    </alternativeName>
</protein>
<feature type="chain" id="PRO_0000090207" description="Triosephosphate isomerase">
    <location>
        <begin position="1"/>
        <end position="274"/>
    </location>
</feature>
<feature type="active site" description="Electrophile" evidence="1">
    <location>
        <position position="118"/>
    </location>
</feature>
<feature type="active site" description="Proton acceptor" evidence="1">
    <location>
        <position position="188"/>
    </location>
</feature>
<feature type="binding site" evidence="1">
    <location>
        <begin position="31"/>
        <end position="33"/>
    </location>
    <ligand>
        <name>substrate</name>
    </ligand>
</feature>
<feature type="binding site" evidence="1">
    <location>
        <position position="194"/>
    </location>
    <ligand>
        <name>substrate</name>
    </ligand>
</feature>
<feature type="binding site" evidence="1">
    <location>
        <position position="234"/>
    </location>
    <ligand>
        <name>substrate</name>
    </ligand>
</feature>
<feature type="binding site" evidence="1">
    <location>
        <begin position="255"/>
        <end position="256"/>
    </location>
    <ligand>
        <name>substrate</name>
    </ligand>
</feature>
<keyword id="KW-0963">Cytoplasm</keyword>
<keyword id="KW-0312">Gluconeogenesis</keyword>
<keyword id="KW-0324">Glycolysis</keyword>
<keyword id="KW-0413">Isomerase</keyword>
<keyword id="KW-1185">Reference proteome</keyword>
<reference key="1">
    <citation type="journal article" date="1998" name="Science">
        <title>Genome sequence of an obligate intracellular pathogen of humans: Chlamydia trachomatis.</title>
        <authorList>
            <person name="Stephens R.S."/>
            <person name="Kalman S."/>
            <person name="Lammel C.J."/>
            <person name="Fan J."/>
            <person name="Marathe R."/>
            <person name="Aravind L."/>
            <person name="Mitchell W.P."/>
            <person name="Olinger L."/>
            <person name="Tatusov R.L."/>
            <person name="Zhao Q."/>
            <person name="Koonin E.V."/>
            <person name="Davis R.W."/>
        </authorList>
    </citation>
    <scope>NUCLEOTIDE SEQUENCE [LARGE SCALE GENOMIC DNA]</scope>
    <source>
        <strain>ATCC VR-885 / DSM 19411 / UW-3/Cx</strain>
    </source>
</reference>
<organism>
    <name type="scientific">Chlamydia trachomatis serovar D (strain ATCC VR-885 / DSM 19411 / UW-3/Cx)</name>
    <dbReference type="NCBI Taxonomy" id="272561"/>
    <lineage>
        <taxon>Bacteria</taxon>
        <taxon>Pseudomonadati</taxon>
        <taxon>Chlamydiota</taxon>
        <taxon>Chlamydiia</taxon>
        <taxon>Chlamydiales</taxon>
        <taxon>Chlamydiaceae</taxon>
        <taxon>Chlamydia/Chlamydophila group</taxon>
        <taxon>Chlamydia</taxon>
    </lineage>
</organism>
<accession>O84332</accession>
<proteinExistence type="inferred from homology"/>
<gene>
    <name evidence="1" type="primary">tpiA</name>
    <name type="synonym">tpi</name>
    <name type="ordered locus">CT_328</name>
</gene>
<comment type="function">
    <text evidence="1">Involved in the gluconeogenesis. Catalyzes stereospecifically the conversion of dihydroxyacetone phosphate (DHAP) to D-glyceraldehyde-3-phosphate (G3P).</text>
</comment>
<comment type="catalytic activity">
    <reaction evidence="1">
        <text>D-glyceraldehyde 3-phosphate = dihydroxyacetone phosphate</text>
        <dbReference type="Rhea" id="RHEA:18585"/>
        <dbReference type="ChEBI" id="CHEBI:57642"/>
        <dbReference type="ChEBI" id="CHEBI:59776"/>
        <dbReference type="EC" id="5.3.1.1"/>
    </reaction>
</comment>
<comment type="pathway">
    <text evidence="1">Carbohydrate biosynthesis; gluconeogenesis.</text>
</comment>
<comment type="pathway">
    <text evidence="1">Carbohydrate degradation; glycolysis; D-glyceraldehyde 3-phosphate from glycerone phosphate: step 1/1.</text>
</comment>
<comment type="subunit">
    <text evidence="1">Homodimer.</text>
</comment>
<comment type="subcellular location">
    <subcellularLocation>
        <location evidence="1">Cytoplasm</location>
    </subcellularLocation>
</comment>
<comment type="similarity">
    <text evidence="1">Belongs to the triosephosphate isomerase family.</text>
</comment>
<name>TPIS_CHLTR</name>
<dbReference type="EC" id="5.3.1.1" evidence="1"/>
<dbReference type="EMBL" id="AE001273">
    <property type="protein sequence ID" value="AAC67921.1"/>
    <property type="molecule type" value="Genomic_DNA"/>
</dbReference>
<dbReference type="PIR" id="E71529">
    <property type="entry name" value="E71529"/>
</dbReference>
<dbReference type="RefSeq" id="WP_009871677.1">
    <property type="nucleotide sequence ID" value="NC_000117.1"/>
</dbReference>
<dbReference type="SMR" id="O84332"/>
<dbReference type="FunCoup" id="O84332">
    <property type="interactions" value="230"/>
</dbReference>
<dbReference type="STRING" id="272561.CT_328"/>
<dbReference type="EnsemblBacteria" id="AAC67921">
    <property type="protein sequence ID" value="AAC67921"/>
    <property type="gene ID" value="CT_328"/>
</dbReference>
<dbReference type="KEGG" id="ctr:CT_328"/>
<dbReference type="PATRIC" id="fig|272561.5.peg.353"/>
<dbReference type="HOGENOM" id="CLU_024251_2_1_0"/>
<dbReference type="InParanoid" id="O84332"/>
<dbReference type="OrthoDB" id="9809429at2"/>
<dbReference type="UniPathway" id="UPA00109">
    <property type="reaction ID" value="UER00189"/>
</dbReference>
<dbReference type="UniPathway" id="UPA00138"/>
<dbReference type="Proteomes" id="UP000000431">
    <property type="component" value="Chromosome"/>
</dbReference>
<dbReference type="GO" id="GO:0005829">
    <property type="term" value="C:cytosol"/>
    <property type="evidence" value="ECO:0000318"/>
    <property type="project" value="GO_Central"/>
</dbReference>
<dbReference type="GO" id="GO:0004807">
    <property type="term" value="F:triose-phosphate isomerase activity"/>
    <property type="evidence" value="ECO:0000318"/>
    <property type="project" value="GO_Central"/>
</dbReference>
<dbReference type="GO" id="GO:0006094">
    <property type="term" value="P:gluconeogenesis"/>
    <property type="evidence" value="ECO:0000318"/>
    <property type="project" value="GO_Central"/>
</dbReference>
<dbReference type="GO" id="GO:0046166">
    <property type="term" value="P:glyceraldehyde-3-phosphate biosynthetic process"/>
    <property type="evidence" value="ECO:0000318"/>
    <property type="project" value="GO_Central"/>
</dbReference>
<dbReference type="GO" id="GO:0019563">
    <property type="term" value="P:glycerol catabolic process"/>
    <property type="evidence" value="ECO:0000318"/>
    <property type="project" value="GO_Central"/>
</dbReference>
<dbReference type="GO" id="GO:0006096">
    <property type="term" value="P:glycolytic process"/>
    <property type="evidence" value="ECO:0000318"/>
    <property type="project" value="GO_Central"/>
</dbReference>
<dbReference type="CDD" id="cd00311">
    <property type="entry name" value="TIM"/>
    <property type="match status" value="1"/>
</dbReference>
<dbReference type="FunFam" id="3.20.20.70:FF:000016">
    <property type="entry name" value="Triosephosphate isomerase"/>
    <property type="match status" value="1"/>
</dbReference>
<dbReference type="Gene3D" id="3.20.20.70">
    <property type="entry name" value="Aldolase class I"/>
    <property type="match status" value="1"/>
</dbReference>
<dbReference type="HAMAP" id="MF_00147_B">
    <property type="entry name" value="TIM_B"/>
    <property type="match status" value="1"/>
</dbReference>
<dbReference type="InterPro" id="IPR013785">
    <property type="entry name" value="Aldolase_TIM"/>
</dbReference>
<dbReference type="InterPro" id="IPR035990">
    <property type="entry name" value="TIM_sf"/>
</dbReference>
<dbReference type="InterPro" id="IPR022896">
    <property type="entry name" value="TrioseP_Isoase_bac/euk"/>
</dbReference>
<dbReference type="InterPro" id="IPR000652">
    <property type="entry name" value="Triosephosphate_isomerase"/>
</dbReference>
<dbReference type="InterPro" id="IPR020861">
    <property type="entry name" value="Triosephosphate_isomerase_AS"/>
</dbReference>
<dbReference type="NCBIfam" id="TIGR00419">
    <property type="entry name" value="tim"/>
    <property type="match status" value="1"/>
</dbReference>
<dbReference type="PANTHER" id="PTHR21139">
    <property type="entry name" value="TRIOSEPHOSPHATE ISOMERASE"/>
    <property type="match status" value="1"/>
</dbReference>
<dbReference type="PANTHER" id="PTHR21139:SF42">
    <property type="entry name" value="TRIOSEPHOSPHATE ISOMERASE"/>
    <property type="match status" value="1"/>
</dbReference>
<dbReference type="Pfam" id="PF00121">
    <property type="entry name" value="TIM"/>
    <property type="match status" value="1"/>
</dbReference>
<dbReference type="SUPFAM" id="SSF51351">
    <property type="entry name" value="Triosephosphate isomerase (TIM)"/>
    <property type="match status" value="1"/>
</dbReference>
<dbReference type="PROSITE" id="PS00171">
    <property type="entry name" value="TIM_1"/>
    <property type="match status" value="1"/>
</dbReference>
<dbReference type="PROSITE" id="PS51440">
    <property type="entry name" value="TIM_2"/>
    <property type="match status" value="1"/>
</dbReference>